<sequence>MDKPASRHFSVLIIDDEPQVTSELRELLENSGYRCVTSTHRESAIASFQADPNIGLVICDLYLGQDNGIRLIESLKEVAGNGRFFESIILTGHDGRQEVIEAMRVGAADYYQKPVAPQELLHGLERLESRLHERVRSQLSLSHVNQRLEYLAESLNSIYRDIHKIKYEVHGNSQPSALRSEDSQPSAPPAPVAESQVSPSNPLFGKLSPRQQAVARLVSKGLTNYQIAYELGITENTVKLYVSQVLRLMHMHNRTQLALALSPAAMQQGSGAVVH</sequence>
<name>PPRB_PSEAE</name>
<evidence type="ECO:0000255" key="1">
    <source>
        <dbReference type="PROSITE-ProRule" id="PRU00169"/>
    </source>
</evidence>
<evidence type="ECO:0000255" key="2">
    <source>
        <dbReference type="PROSITE-ProRule" id="PRU00411"/>
    </source>
</evidence>
<evidence type="ECO:0000256" key="3">
    <source>
        <dbReference type="SAM" id="MobiDB-lite"/>
    </source>
</evidence>
<evidence type="ECO:0000269" key="4">
    <source>
    </source>
</evidence>
<evidence type="ECO:0000269" key="5">
    <source>
    </source>
</evidence>
<evidence type="ECO:0000269" key="6">
    <source>
    </source>
</evidence>
<evidence type="ECO:0000269" key="7">
    <source>
    </source>
</evidence>
<evidence type="ECO:0000269" key="8">
    <source>
    </source>
</evidence>
<evidence type="ECO:0000303" key="9">
    <source>
    </source>
</evidence>
<evidence type="ECO:0000305" key="10">
    <source>
    </source>
</evidence>
<evidence type="ECO:0000305" key="11">
    <source>
    </source>
</evidence>
<reference key="1">
    <citation type="journal article" date="2000" name="Nature">
        <title>Complete genome sequence of Pseudomonas aeruginosa PAO1, an opportunistic pathogen.</title>
        <authorList>
            <person name="Stover C.K."/>
            <person name="Pham X.-Q.T."/>
            <person name="Erwin A.L."/>
            <person name="Mizoguchi S.D."/>
            <person name="Warrener P."/>
            <person name="Hickey M.J."/>
            <person name="Brinkman F.S.L."/>
            <person name="Hufnagle W.O."/>
            <person name="Kowalik D.J."/>
            <person name="Lagrou M."/>
            <person name="Garber R.L."/>
            <person name="Goltry L."/>
            <person name="Tolentino E."/>
            <person name="Westbrock-Wadman S."/>
            <person name="Yuan Y."/>
            <person name="Brody L.L."/>
            <person name="Coulter S.N."/>
            <person name="Folger K.R."/>
            <person name="Kas A."/>
            <person name="Larbig K."/>
            <person name="Lim R.M."/>
            <person name="Smith K.A."/>
            <person name="Spencer D.H."/>
            <person name="Wong G.K.-S."/>
            <person name="Wu Z."/>
            <person name="Paulsen I.T."/>
            <person name="Reizer J."/>
            <person name="Saier M.H. Jr."/>
            <person name="Hancock R.E.W."/>
            <person name="Lory S."/>
            <person name="Olson M.V."/>
        </authorList>
    </citation>
    <scope>NUCLEOTIDE SEQUENCE [LARGE SCALE GENOMIC DNA]</scope>
    <source>
        <strain>ATCC 15692 / DSM 22644 / CIP 104116 / JCM 14847 / LMG 12228 / 1C / PRS 101 / PAO1</strain>
    </source>
</reference>
<reference key="2">
    <citation type="journal article" date="2003" name="Antimicrob. Agents Chemother.">
        <title>Regulation of membrane permeability by a two-component regulatory system in Pseudomonas aeruginosa.</title>
        <authorList>
            <person name="Wang Y."/>
            <person name="Ha U."/>
            <person name="Zeng L."/>
            <person name="Jin S."/>
        </authorList>
    </citation>
    <scope>FUNCTION</scope>
    <scope>PHOSPHORYLATION</scope>
    <source>
        <strain>PAK</strain>
    </source>
</reference>
<reference key="3">
    <citation type="journal article" date="2005" name="Mol. Microbiol.">
        <title>The two-component response regulator PprB modulates quorum-sensing signal production and global gene expression in Pseudomonas aeruginosa.</title>
        <authorList>
            <person name="Dong Y.H."/>
            <person name="Zhang X.F."/>
            <person name="Soo H.M."/>
            <person name="Greenberg E.P."/>
            <person name="Zhang L.H."/>
        </authorList>
    </citation>
    <scope>RETRACTED PAPER</scope>
</reference>
<reference key="4">
    <citation type="journal article" date="2008" name="Mol. Microbiol.">
        <authorList>
            <person name="Pugsley A."/>
        </authorList>
    </citation>
    <scope>RETRACTION NOTICE OF PUBMED:15882421</scope>
</reference>
<reference key="5">
    <citation type="journal article" date="2009" name="J. Bacteriol.">
        <title>Organization and PprB-dependent control of the Pseudomonas aeruginosa tad Locus, involved in Flp pilus biology.</title>
        <authorList>
            <person name="Bernard C.S."/>
            <person name="Bordi C."/>
            <person name="Termine E."/>
            <person name="Filloux A."/>
            <person name="de Bentzmann S."/>
        </authorList>
    </citation>
    <scope>FUNCTION</scope>
</reference>
<reference key="6">
    <citation type="journal article" date="2011" name="Environ. Microbiol.">
        <title>The PprA-PprB two-component system activates CupE, the first non-archetypal Pseudomonas aeruginosa chaperone-usher pathway system assembling fimbriae.</title>
        <authorList>
            <person name="Giraud C."/>
            <person name="Bernard C.S."/>
            <person name="Calderon V."/>
            <person name="Yang L."/>
            <person name="Filloux A."/>
            <person name="Molin S."/>
            <person name="Fichant G."/>
            <person name="Bordi C."/>
            <person name="de Bentzmann S."/>
        </authorList>
    </citation>
    <scope>FUNCTION</scope>
    <scope>DNA-BINDING</scope>
</reference>
<reference key="7">
    <citation type="journal article" date="2012" name="PLoS Pathog.">
        <title>Unique biofilm signature, drug susceptibility and decreased virulence in Drosophila through the Pseudomonas aeruginosa two-component system PprAB.</title>
        <authorList>
            <person name="de Bentzmann S."/>
            <person name="Giraud C."/>
            <person name="Bernard C.S."/>
            <person name="Calderon V."/>
            <person name="Ewald F."/>
            <person name="Plesiat P."/>
            <person name="Nguyen C."/>
            <person name="Grunwald D."/>
            <person name="Attree I."/>
            <person name="Jeannot K."/>
            <person name="Fauvarque M.O."/>
            <person name="Bordi C."/>
        </authorList>
    </citation>
    <scope>FUNCTION</scope>
</reference>
<reference key="8">
    <citation type="journal article" date="2019" name="Appl. Environ. Microbiol.">
        <title>Carbon starvation induces the expression of PprB-regulated genes in Pseudomonas aeruginosa.</title>
        <authorList>
            <person name="Wang C."/>
            <person name="Chen W."/>
            <person name="Xia A."/>
            <person name="Zhang R."/>
            <person name="Huang Y."/>
            <person name="Yang S."/>
            <person name="Ni L."/>
            <person name="Jin F."/>
        </authorList>
    </citation>
    <scope>FUNCTION</scope>
    <scope>INDUCTION BY CARBON STARVATION</scope>
    <scope>MUTAGENESIS OF ASP-60</scope>
    <scope>DISRUPTION PHENOTYPE</scope>
</reference>
<accession>Q9HWA4</accession>
<proteinExistence type="evidence at protein level"/>
<protein>
    <recommendedName>
        <fullName evidence="9">Two-component response regulator PprB</fullName>
    </recommendedName>
</protein>
<keyword id="KW-0238">DNA-binding</keyword>
<keyword id="KW-0597">Phosphoprotein</keyword>
<keyword id="KW-1185">Reference proteome</keyword>
<keyword id="KW-0804">Transcription</keyword>
<keyword id="KW-0805">Transcription regulation</keyword>
<keyword id="KW-0902">Two-component regulatory system</keyword>
<gene>
    <name evidence="9" type="primary">pprB</name>
    <name type="ordered locus">PA4296</name>
</gene>
<organism>
    <name type="scientific">Pseudomonas aeruginosa (strain ATCC 15692 / DSM 22644 / CIP 104116 / JCM 14847 / LMG 12228 / 1C / PRS 101 / PAO1)</name>
    <dbReference type="NCBI Taxonomy" id="208964"/>
    <lineage>
        <taxon>Bacteria</taxon>
        <taxon>Pseudomonadati</taxon>
        <taxon>Pseudomonadota</taxon>
        <taxon>Gammaproteobacteria</taxon>
        <taxon>Pseudomonadales</taxon>
        <taxon>Pseudomonadaceae</taxon>
        <taxon>Pseudomonas</taxon>
    </lineage>
</organism>
<dbReference type="EMBL" id="AE004091">
    <property type="protein sequence ID" value="AAG07684.1"/>
    <property type="molecule type" value="Genomic_DNA"/>
</dbReference>
<dbReference type="PIR" id="G83107">
    <property type="entry name" value="G83107"/>
</dbReference>
<dbReference type="RefSeq" id="NP_252986.1">
    <property type="nucleotide sequence ID" value="NC_002516.2"/>
</dbReference>
<dbReference type="RefSeq" id="WP_003114985.1">
    <property type="nucleotide sequence ID" value="NZ_QZGE01000034.1"/>
</dbReference>
<dbReference type="SMR" id="Q9HWA4"/>
<dbReference type="STRING" id="208964.PA4296"/>
<dbReference type="PaxDb" id="208964-PA4296"/>
<dbReference type="GeneID" id="881658"/>
<dbReference type="KEGG" id="pae:PA4296"/>
<dbReference type="PATRIC" id="fig|208964.12.peg.4498"/>
<dbReference type="PseudoCAP" id="PA4296"/>
<dbReference type="HOGENOM" id="CLU_000445_90_4_6"/>
<dbReference type="InParanoid" id="Q9HWA4"/>
<dbReference type="OrthoDB" id="7055878at2"/>
<dbReference type="PhylomeDB" id="Q9HWA4"/>
<dbReference type="BioCyc" id="PAER208964:G1FZ6-4380-MONOMER"/>
<dbReference type="PHI-base" id="PHI:2620"/>
<dbReference type="Proteomes" id="UP000002438">
    <property type="component" value="Chromosome"/>
</dbReference>
<dbReference type="GO" id="GO:0003677">
    <property type="term" value="F:DNA binding"/>
    <property type="evidence" value="ECO:0007669"/>
    <property type="project" value="UniProtKB-KW"/>
</dbReference>
<dbReference type="GO" id="GO:0000156">
    <property type="term" value="F:phosphorelay response regulator activity"/>
    <property type="evidence" value="ECO:0000314"/>
    <property type="project" value="PseudoCAP"/>
</dbReference>
<dbReference type="GO" id="GO:0045785">
    <property type="term" value="P:positive regulation of cell adhesion"/>
    <property type="evidence" value="ECO:0000315"/>
    <property type="project" value="PseudoCAP"/>
</dbReference>
<dbReference type="GO" id="GO:1900233">
    <property type="term" value="P:positive regulation of single-species biofilm formation on inanimate substrate"/>
    <property type="evidence" value="ECO:0000315"/>
    <property type="project" value="PseudoCAP"/>
</dbReference>
<dbReference type="GO" id="GO:0006355">
    <property type="term" value="P:regulation of DNA-templated transcription"/>
    <property type="evidence" value="ECO:0007669"/>
    <property type="project" value="InterPro"/>
</dbReference>
<dbReference type="CDD" id="cd06170">
    <property type="entry name" value="LuxR_C_like"/>
    <property type="match status" value="1"/>
</dbReference>
<dbReference type="CDD" id="cd00156">
    <property type="entry name" value="REC"/>
    <property type="match status" value="1"/>
</dbReference>
<dbReference type="FunFam" id="1.10.10.10:FF:001465">
    <property type="entry name" value="DNA-binding response regulator"/>
    <property type="match status" value="1"/>
</dbReference>
<dbReference type="Gene3D" id="3.40.50.2300">
    <property type="match status" value="1"/>
</dbReference>
<dbReference type="Gene3D" id="1.10.10.10">
    <property type="entry name" value="Winged helix-like DNA-binding domain superfamily/Winged helix DNA-binding domain"/>
    <property type="match status" value="1"/>
</dbReference>
<dbReference type="InterPro" id="IPR011006">
    <property type="entry name" value="CheY-like_superfamily"/>
</dbReference>
<dbReference type="InterPro" id="IPR016032">
    <property type="entry name" value="Sig_transdc_resp-reg_C-effctor"/>
</dbReference>
<dbReference type="InterPro" id="IPR001789">
    <property type="entry name" value="Sig_transdc_resp-reg_receiver"/>
</dbReference>
<dbReference type="InterPro" id="IPR000792">
    <property type="entry name" value="Tscrpt_reg_LuxR_C"/>
</dbReference>
<dbReference type="InterPro" id="IPR039420">
    <property type="entry name" value="WalR-like"/>
</dbReference>
<dbReference type="InterPro" id="IPR036388">
    <property type="entry name" value="WH-like_DNA-bd_sf"/>
</dbReference>
<dbReference type="PANTHER" id="PTHR43214:SF41">
    <property type="entry name" value="NITRATE_NITRITE RESPONSE REGULATOR PROTEIN NARP"/>
    <property type="match status" value="1"/>
</dbReference>
<dbReference type="PANTHER" id="PTHR43214">
    <property type="entry name" value="TWO-COMPONENT RESPONSE REGULATOR"/>
    <property type="match status" value="1"/>
</dbReference>
<dbReference type="Pfam" id="PF00196">
    <property type="entry name" value="GerE"/>
    <property type="match status" value="1"/>
</dbReference>
<dbReference type="Pfam" id="PF00072">
    <property type="entry name" value="Response_reg"/>
    <property type="match status" value="1"/>
</dbReference>
<dbReference type="PRINTS" id="PR00038">
    <property type="entry name" value="HTHLUXR"/>
</dbReference>
<dbReference type="SMART" id="SM00421">
    <property type="entry name" value="HTH_LUXR"/>
    <property type="match status" value="1"/>
</dbReference>
<dbReference type="SMART" id="SM00448">
    <property type="entry name" value="REC"/>
    <property type="match status" value="1"/>
</dbReference>
<dbReference type="SUPFAM" id="SSF46894">
    <property type="entry name" value="C-terminal effector domain of the bipartite response regulators"/>
    <property type="match status" value="1"/>
</dbReference>
<dbReference type="SUPFAM" id="SSF52172">
    <property type="entry name" value="CheY-like"/>
    <property type="match status" value="1"/>
</dbReference>
<dbReference type="PROSITE" id="PS50043">
    <property type="entry name" value="HTH_LUXR_2"/>
    <property type="match status" value="1"/>
</dbReference>
<dbReference type="PROSITE" id="PS50110">
    <property type="entry name" value="RESPONSE_REGULATORY"/>
    <property type="match status" value="1"/>
</dbReference>
<comment type="function">
    <text evidence="4 5 6 7 8">Member of the two-component regulatory system PprA/PprB involved in biofilm formation by controlling the expression of many related genes including type IVb pili major subunit flp pilin, adhesin bapA or cupE fimbriae (PubMed:19151143, PubMed:21091863, PubMed:23209420, PubMed:31492668). Functions as a transcription regulator by direct binding to promoter regions (PubMed:12499175, PubMed:19151143). Negatively regulates its own transcription (PubMed:31492668).</text>
</comment>
<comment type="induction">
    <text evidence="8">By carbon starvation. This increased expression is controlled by RpoS.</text>
</comment>
<comment type="PTM">
    <text evidence="4">Phosphorylated by PprA.</text>
</comment>
<comment type="disruption phenotype">
    <text evidence="8">Expression of flp in response to carbon starvation stress is completely eliminated in the deletion mutant.</text>
</comment>
<comment type="caution">
    <text evidence="10 11">An article reported the role of PprB in modulation of the quorum-sensing signal production. However, this paper was later retracted as the authors' main conclusion on the regulatory role of PprB on AHL signal production in wild type P.aeruginosa is not correct.</text>
</comment>
<feature type="chain" id="PRO_0000448554" description="Two-component response regulator PprB">
    <location>
        <begin position="1"/>
        <end position="275"/>
    </location>
</feature>
<feature type="domain" description="Response regulatory" evidence="1">
    <location>
        <begin position="10"/>
        <end position="128"/>
    </location>
</feature>
<feature type="domain" description="HTH luxR-type" evidence="2">
    <location>
        <begin position="200"/>
        <end position="265"/>
    </location>
</feature>
<feature type="DNA-binding region" description="H-T-H motif" evidence="2">
    <location>
        <begin position="224"/>
        <end position="243"/>
    </location>
</feature>
<feature type="region of interest" description="Disordered" evidence="3">
    <location>
        <begin position="173"/>
        <end position="205"/>
    </location>
</feature>
<feature type="modified residue" description="4-aspartylphosphate" evidence="1">
    <location>
        <position position="60"/>
    </location>
</feature>
<feature type="mutagenesis site" description="No change in transcriptional regulatory activity." evidence="8">
    <original>D</original>
    <variation>A</variation>
    <location>
        <position position="60"/>
    </location>
</feature>